<accession>Q9TTU2</accession>
<protein>
    <recommendedName>
        <fullName evidence="1">Adenylate kinase isoenzyme 6</fullName>
        <shortName evidence="1">AK6</shortName>
        <ecNumber evidence="1">2.7.4.3</ecNumber>
    </recommendedName>
    <alternativeName>
        <fullName evidence="1">Coilin-interacting nuclear ATPase protein</fullName>
    </alternativeName>
    <alternativeName>
        <fullName evidence="1">Dual activity adenylate kinase/ATPase</fullName>
        <shortName evidence="1">AK/ATPase</shortName>
    </alternativeName>
</protein>
<proteinExistence type="evidence at transcript level"/>
<feature type="chain" id="PRO_0000153898" description="Adenylate kinase isoenzyme 6">
    <location>
        <begin position="1"/>
        <end position="172"/>
    </location>
</feature>
<feature type="region of interest" description="NMPbind" evidence="1">
    <location>
        <begin position="33"/>
        <end position="56"/>
    </location>
</feature>
<feature type="region of interest" description="LID" evidence="1">
    <location>
        <begin position="108"/>
        <end position="118"/>
    </location>
</feature>
<feature type="binding site" evidence="1">
    <location>
        <position position="13"/>
    </location>
    <ligand>
        <name>ATP</name>
        <dbReference type="ChEBI" id="CHEBI:30616"/>
    </ligand>
</feature>
<feature type="binding site" evidence="1">
    <location>
        <position position="15"/>
    </location>
    <ligand>
        <name>ATP</name>
        <dbReference type="ChEBI" id="CHEBI:30616"/>
    </ligand>
</feature>
<feature type="binding site" evidence="1">
    <location>
        <position position="16"/>
    </location>
    <ligand>
        <name>ATP</name>
        <dbReference type="ChEBI" id="CHEBI:30616"/>
    </ligand>
</feature>
<feature type="binding site" evidence="1">
    <location>
        <position position="17"/>
    </location>
    <ligand>
        <name>ATP</name>
        <dbReference type="ChEBI" id="CHEBI:30616"/>
    </ligand>
</feature>
<feature type="binding site" evidence="1">
    <location>
        <position position="18"/>
    </location>
    <ligand>
        <name>ATP</name>
        <dbReference type="ChEBI" id="CHEBI:30616"/>
    </ligand>
</feature>
<feature type="binding site" evidence="1">
    <location>
        <position position="109"/>
    </location>
    <ligand>
        <name>ATP</name>
        <dbReference type="ChEBI" id="CHEBI:30616"/>
    </ligand>
</feature>
<feature type="binding site" evidence="1">
    <location>
        <position position="148"/>
    </location>
    <ligand>
        <name>ATP</name>
        <dbReference type="ChEBI" id="CHEBI:30616"/>
    </ligand>
</feature>
<name>KAD6_RABIT</name>
<dbReference type="EC" id="2.7.4.3" evidence="1"/>
<dbReference type="EMBL" id="AF195950">
    <property type="protein sequence ID" value="AAF09498.1"/>
    <property type="molecule type" value="mRNA"/>
</dbReference>
<dbReference type="RefSeq" id="XP_008260533.1">
    <property type="nucleotide sequence ID" value="XM_008262311.2"/>
</dbReference>
<dbReference type="SMR" id="Q9TTU2"/>
<dbReference type="FunCoup" id="Q9TTU2">
    <property type="interactions" value="1582"/>
</dbReference>
<dbReference type="STRING" id="9986.ENSOCUP00000023998"/>
<dbReference type="PaxDb" id="9986-ENSOCUP00000023998"/>
<dbReference type="eggNOG" id="KOG3347">
    <property type="taxonomic scope" value="Eukaryota"/>
</dbReference>
<dbReference type="InParanoid" id="Q9TTU2"/>
<dbReference type="Proteomes" id="UP000001811">
    <property type="component" value="Unplaced"/>
</dbReference>
<dbReference type="GO" id="GO:0015030">
    <property type="term" value="C:Cajal body"/>
    <property type="evidence" value="ECO:0000250"/>
    <property type="project" value="UniProtKB"/>
</dbReference>
<dbReference type="GO" id="GO:0005737">
    <property type="term" value="C:cytoplasm"/>
    <property type="evidence" value="ECO:0007669"/>
    <property type="project" value="UniProtKB-SubCell"/>
</dbReference>
<dbReference type="GO" id="GO:0005654">
    <property type="term" value="C:nucleoplasm"/>
    <property type="evidence" value="ECO:0000250"/>
    <property type="project" value="UniProtKB"/>
</dbReference>
<dbReference type="GO" id="GO:0004017">
    <property type="term" value="F:adenylate kinase activity"/>
    <property type="evidence" value="ECO:0000250"/>
    <property type="project" value="UniProtKB"/>
</dbReference>
<dbReference type="GO" id="GO:0005524">
    <property type="term" value="F:ATP binding"/>
    <property type="evidence" value="ECO:0007669"/>
    <property type="project" value="UniProtKB-KW"/>
</dbReference>
<dbReference type="GO" id="GO:0016887">
    <property type="term" value="F:ATP hydrolysis activity"/>
    <property type="evidence" value="ECO:0007669"/>
    <property type="project" value="UniProtKB-UniRule"/>
</dbReference>
<dbReference type="GO" id="GO:0042274">
    <property type="term" value="P:ribosomal small subunit biogenesis"/>
    <property type="evidence" value="ECO:0007669"/>
    <property type="project" value="UniProtKB-UniRule"/>
</dbReference>
<dbReference type="GO" id="GO:0006364">
    <property type="term" value="P:rRNA processing"/>
    <property type="evidence" value="ECO:0007669"/>
    <property type="project" value="UniProtKB-KW"/>
</dbReference>
<dbReference type="FunFam" id="3.40.50.300:FF:003001">
    <property type="entry name" value="Adenylate kinase isoenzyme 6"/>
    <property type="match status" value="1"/>
</dbReference>
<dbReference type="Gene3D" id="3.40.50.300">
    <property type="entry name" value="P-loop containing nucleotide triphosphate hydrolases"/>
    <property type="match status" value="1"/>
</dbReference>
<dbReference type="HAMAP" id="MF_00039">
    <property type="entry name" value="Adenylate_kinase_AK6"/>
    <property type="match status" value="1"/>
</dbReference>
<dbReference type="InterPro" id="IPR020618">
    <property type="entry name" value="Adenyl_kinase_AK6"/>
</dbReference>
<dbReference type="InterPro" id="IPR027417">
    <property type="entry name" value="P-loop_NTPase"/>
</dbReference>
<dbReference type="PANTHER" id="PTHR12595:SF0">
    <property type="entry name" value="ADENYLATE KINASE ISOENZYME 6"/>
    <property type="match status" value="1"/>
</dbReference>
<dbReference type="PANTHER" id="PTHR12595">
    <property type="entry name" value="POS9-ACTIVATING FACTOR FAP7-RELATED"/>
    <property type="match status" value="1"/>
</dbReference>
<dbReference type="Pfam" id="PF13238">
    <property type="entry name" value="AAA_18"/>
    <property type="match status" value="1"/>
</dbReference>
<dbReference type="SUPFAM" id="SSF52540">
    <property type="entry name" value="P-loop containing nucleoside triphosphate hydrolases"/>
    <property type="match status" value="1"/>
</dbReference>
<sequence>MRLPNILLTGTPGVGKTTLGKELASRSGLKYVNVGDLAREGELYDGFDEEYNCPILDEDRVIDELDTQMRDGGVIVDYHGCDFFPERWFHIVFVLRTETSVLYKRLETRGYSEKKLNDNIQCEIFQVLYEEAMESYKEEIVHQLPSNKPEELEENISQILKWIEQWIKDHNS</sequence>
<organism>
    <name type="scientific">Oryctolagus cuniculus</name>
    <name type="common">Rabbit</name>
    <dbReference type="NCBI Taxonomy" id="9986"/>
    <lineage>
        <taxon>Eukaryota</taxon>
        <taxon>Metazoa</taxon>
        <taxon>Chordata</taxon>
        <taxon>Craniata</taxon>
        <taxon>Vertebrata</taxon>
        <taxon>Euteleostomi</taxon>
        <taxon>Mammalia</taxon>
        <taxon>Eutheria</taxon>
        <taxon>Euarchontoglires</taxon>
        <taxon>Glires</taxon>
        <taxon>Lagomorpha</taxon>
        <taxon>Leporidae</taxon>
        <taxon>Oryctolagus</taxon>
    </lineage>
</organism>
<comment type="function">
    <text evidence="1">Broad-specificity nucleoside monophosphate (NMP) kinase that catalyzes the reversible transfer of the terminal phosphate group between nucleoside triphosphates and monophosphates. Also has ATPase activity. Involved in the late cytoplasmic maturation steps of the 40S ribosomal particles, specifically 18S rRNA maturation. While NMP activity is not required for ribosome maturation, ATPase activity is. Associates transiently with small ribosomal subunit protein uS11. ATP hydrolysis breaks the interaction with uS11. May temporarily remove uS11 from the ribosome to enable a conformational change of the ribosomal RNA that is needed for the final maturation step of the small ribosomal subunit. Its NMP activity may have a role in nuclear energy homeostasis. May be involved in regulation of Cajal body (CB) formation.</text>
</comment>
<comment type="catalytic activity">
    <reaction evidence="1">
        <text>AMP + ATP = 2 ADP</text>
        <dbReference type="Rhea" id="RHEA:12973"/>
        <dbReference type="ChEBI" id="CHEBI:30616"/>
        <dbReference type="ChEBI" id="CHEBI:456215"/>
        <dbReference type="ChEBI" id="CHEBI:456216"/>
        <dbReference type="EC" id="2.7.4.3"/>
    </reaction>
</comment>
<comment type="catalytic activity">
    <reaction evidence="1">
        <text>ATP + H2O = ADP + phosphate + H(+)</text>
        <dbReference type="Rhea" id="RHEA:13065"/>
        <dbReference type="ChEBI" id="CHEBI:15377"/>
        <dbReference type="ChEBI" id="CHEBI:15378"/>
        <dbReference type="ChEBI" id="CHEBI:30616"/>
        <dbReference type="ChEBI" id="CHEBI:43474"/>
        <dbReference type="ChEBI" id="CHEBI:456216"/>
    </reaction>
</comment>
<comment type="subunit">
    <text evidence="1">Monomer and homodimer. Interacts with small ribosomal subunit protein uS11. Not a structural component of 43S pre-ribosomes, but transiently interacts with them by binding to uS11. Interacts with COIL (via C-terminus).</text>
</comment>
<comment type="subcellular location">
    <subcellularLocation>
        <location evidence="1">Cytoplasm</location>
    </subcellularLocation>
    <subcellularLocation>
        <location evidence="1">Nucleus</location>
        <location evidence="1">Nucleoplasm</location>
    </subcellularLocation>
    <subcellularLocation>
        <location evidence="1">Nucleus</location>
        <location evidence="1">Cajal body</location>
    </subcellularLocation>
    <text evidence="1">Displays widespread diffuse nucleoplasmic distribution but not detected in nucleoli. Detected in Cajal bodies but not in all cells.</text>
</comment>
<comment type="similarity">
    <text evidence="1">Belongs to the adenylate kinase family. AK6 subfamily.</text>
</comment>
<evidence type="ECO:0000255" key="1">
    <source>
        <dbReference type="HAMAP-Rule" id="MF_03173"/>
    </source>
</evidence>
<reference key="1">
    <citation type="journal article" date="2000" name="Virology">
        <title>The human T-cell leukemia virus type I (HTLV-I) X region encoded protein p13(II) interacts with cellular proteins.</title>
        <authorList>
            <person name="Hou X."/>
            <person name="Foley S."/>
            <person name="Cueto M."/>
            <person name="Robinson M.A."/>
        </authorList>
    </citation>
    <scope>NUCLEOTIDE SEQUENCE [MRNA]</scope>
    <source>
        <strain>New Zealand white</strain>
    </source>
</reference>
<gene>
    <name evidence="1" type="primary">AK6</name>
    <name evidence="1" type="synonym">CINAP</name>
</gene>
<keyword id="KW-0067">ATP-binding</keyword>
<keyword id="KW-0963">Cytoplasm</keyword>
<keyword id="KW-0418">Kinase</keyword>
<keyword id="KW-0547">Nucleotide-binding</keyword>
<keyword id="KW-0539">Nucleus</keyword>
<keyword id="KW-1185">Reference proteome</keyword>
<keyword id="KW-0690">Ribosome biogenesis</keyword>
<keyword id="KW-0698">rRNA processing</keyword>
<keyword id="KW-0808">Transferase</keyword>